<sequence length="144" mass="16562">MWLQNLLFLGIVVYSFSAPTRSPNPVTRPWKHVDAIKEALSLLNDMRALENEKNEDVDIISNEFSIQRPTCVQTRLKLYKQGLRGNLTKLNGALTMIASHYQTNCPPTPETDCEIEVTTFEDFIKNLKGFLFDIPFDCWKPVQK</sequence>
<feature type="signal peptide" evidence="1">
    <location>
        <begin position="1"/>
        <end position="17"/>
    </location>
</feature>
<feature type="chain" id="PRO_0000144833" description="Granulocyte-macrophage colony-stimulating factor">
    <location>
        <begin position="18"/>
        <end position="144"/>
    </location>
</feature>
<feature type="glycosylation site" description="O-linked (GalNAc...) serine" evidence="1">
    <location>
        <position position="22"/>
    </location>
</feature>
<feature type="glycosylation site" description="O-linked (GalNAc...) threonine" evidence="1">
    <location>
        <position position="27"/>
    </location>
</feature>
<feature type="glycosylation site" description="N-linked (GlcNAc...) asparagine" evidence="2">
    <location>
        <position position="86"/>
    </location>
</feature>
<feature type="disulfide bond" evidence="1">
    <location>
        <begin position="71"/>
        <end position="113"/>
    </location>
</feature>
<feature type="disulfide bond" evidence="1">
    <location>
        <begin position="105"/>
        <end position="138"/>
    </location>
</feature>
<comment type="function">
    <text evidence="1">Cytokine that stimulates the growth and differentiation of hematopoietic precursor cells from various lineages, including granulocytes, macrophages, eosinophils and erythrocytes.</text>
</comment>
<comment type="subunit">
    <text evidence="1">Monomer. The signaling GM-CSF receptor complex is a dodecamer of two head-to-head hexamers of two alpha, two beta, and two ligand subunits (By similarity).</text>
</comment>
<comment type="subcellular location">
    <subcellularLocation>
        <location>Secreted</location>
    </subcellularLocation>
</comment>
<comment type="similarity">
    <text evidence="3">Belongs to the GM-CSF family.</text>
</comment>
<name>CSF2_RAT</name>
<keyword id="KW-0202">Cytokine</keyword>
<keyword id="KW-1015">Disulfide bond</keyword>
<keyword id="KW-0325">Glycoprotein</keyword>
<keyword id="KW-0339">Growth factor</keyword>
<keyword id="KW-1185">Reference proteome</keyword>
<keyword id="KW-0964">Secreted</keyword>
<keyword id="KW-0732">Signal</keyword>
<proteinExistence type="evidence at transcript level"/>
<accession>P48750</accession>
<gene>
    <name type="primary">Csf2</name>
    <name type="synonym">Csfgm</name>
</gene>
<dbReference type="EMBL" id="AABR03075230">
    <property type="status" value="NOT_ANNOTATED_CDS"/>
    <property type="molecule type" value="Genomic_DNA"/>
</dbReference>
<dbReference type="EMBL" id="U00620">
    <property type="protein sequence ID" value="AAA18281.1"/>
    <property type="molecule type" value="mRNA"/>
</dbReference>
<dbReference type="PIR" id="I46269">
    <property type="entry name" value="I46269"/>
</dbReference>
<dbReference type="RefSeq" id="NP_446304.1">
    <property type="nucleotide sequence ID" value="NM_053852.1"/>
</dbReference>
<dbReference type="SMR" id="P48750"/>
<dbReference type="FunCoup" id="P48750">
    <property type="interactions" value="151"/>
</dbReference>
<dbReference type="STRING" id="10116.ENSRNOP00000034235"/>
<dbReference type="GlyCosmos" id="P48750">
    <property type="glycosylation" value="3 sites, No reported glycans"/>
</dbReference>
<dbReference type="GlyGen" id="P48750">
    <property type="glycosylation" value="4 sites"/>
</dbReference>
<dbReference type="PhosphoSitePlus" id="P48750"/>
<dbReference type="PaxDb" id="10116-ENSRNOP00000034235"/>
<dbReference type="Ensembl" id="ENSRNOT00000032333.4">
    <property type="protein sequence ID" value="ENSRNOP00000034235.3"/>
    <property type="gene ID" value="ENSRNOG00000026805.4"/>
</dbReference>
<dbReference type="GeneID" id="116630"/>
<dbReference type="KEGG" id="rno:116630"/>
<dbReference type="UCSC" id="RGD:621065">
    <property type="organism name" value="rat"/>
</dbReference>
<dbReference type="AGR" id="RGD:621065"/>
<dbReference type="CTD" id="1437"/>
<dbReference type="RGD" id="621065">
    <property type="gene designation" value="Csf2"/>
</dbReference>
<dbReference type="eggNOG" id="ENOG502TDUI">
    <property type="taxonomic scope" value="Eukaryota"/>
</dbReference>
<dbReference type="GeneTree" id="ENSGT00390000013425"/>
<dbReference type="HOGENOM" id="CLU_152286_0_0_1"/>
<dbReference type="InParanoid" id="P48750"/>
<dbReference type="OMA" id="SCETQII"/>
<dbReference type="OrthoDB" id="9633166at2759"/>
<dbReference type="PhylomeDB" id="P48750"/>
<dbReference type="TreeFam" id="TF338611"/>
<dbReference type="Reactome" id="R-RNO-512988">
    <property type="pathway name" value="Interleukin-3, Interleukin-5 and GM-CSF signaling"/>
</dbReference>
<dbReference type="Reactome" id="R-RNO-5673001">
    <property type="pathway name" value="RAF/MAP kinase cascade"/>
</dbReference>
<dbReference type="Reactome" id="R-RNO-912526">
    <property type="pathway name" value="Interleukin receptor SHC signaling"/>
</dbReference>
<dbReference type="PRO" id="PR:P48750"/>
<dbReference type="Proteomes" id="UP000002494">
    <property type="component" value="Chromosome 10"/>
</dbReference>
<dbReference type="Bgee" id="ENSRNOG00000026805">
    <property type="expression patterns" value="Expressed in lung and 7 other cell types or tissues"/>
</dbReference>
<dbReference type="GO" id="GO:0005576">
    <property type="term" value="C:extracellular region"/>
    <property type="evidence" value="ECO:0000314"/>
    <property type="project" value="RGD"/>
</dbReference>
<dbReference type="GO" id="GO:0005615">
    <property type="term" value="C:extracellular space"/>
    <property type="evidence" value="ECO:0000314"/>
    <property type="project" value="RGD"/>
</dbReference>
<dbReference type="GO" id="GO:0030526">
    <property type="term" value="C:granulocyte macrophage colony-stimulating factor receptor complex"/>
    <property type="evidence" value="ECO:0000266"/>
    <property type="project" value="RGD"/>
</dbReference>
<dbReference type="GO" id="GO:0043231">
    <property type="term" value="C:intracellular membrane-bounded organelle"/>
    <property type="evidence" value="ECO:0007669"/>
    <property type="project" value="Ensembl"/>
</dbReference>
<dbReference type="GO" id="GO:0005125">
    <property type="term" value="F:cytokine activity"/>
    <property type="evidence" value="ECO:0000314"/>
    <property type="project" value="RGD"/>
</dbReference>
<dbReference type="GO" id="GO:0005129">
    <property type="term" value="F:granulocyte macrophage colony-stimulating factor receptor binding"/>
    <property type="evidence" value="ECO:0007669"/>
    <property type="project" value="InterPro"/>
</dbReference>
<dbReference type="GO" id="GO:0008083">
    <property type="term" value="F:growth factor activity"/>
    <property type="evidence" value="ECO:0007669"/>
    <property type="project" value="UniProtKB-KW"/>
</dbReference>
<dbReference type="GO" id="GO:0008283">
    <property type="term" value="P:cell population proliferation"/>
    <property type="evidence" value="ECO:0000266"/>
    <property type="project" value="RGD"/>
</dbReference>
<dbReference type="GO" id="GO:0007259">
    <property type="term" value="P:cell surface receptor signaling pathway via JAK-STAT"/>
    <property type="evidence" value="ECO:0000266"/>
    <property type="project" value="RGD"/>
</dbReference>
<dbReference type="GO" id="GO:0097696">
    <property type="term" value="P:cell surface receptor signaling pathway via STAT"/>
    <property type="evidence" value="ECO:0000266"/>
    <property type="project" value="RGD"/>
</dbReference>
<dbReference type="GO" id="GO:0097011">
    <property type="term" value="P:cellular response to granulocyte macrophage colony-stimulating factor stimulus"/>
    <property type="evidence" value="ECO:0000266"/>
    <property type="project" value="RGD"/>
</dbReference>
<dbReference type="GO" id="GO:0071222">
    <property type="term" value="P:cellular response to lipopolysaccharide"/>
    <property type="evidence" value="ECO:0000270"/>
    <property type="project" value="RGD"/>
</dbReference>
<dbReference type="GO" id="GO:0097028">
    <property type="term" value="P:dendritic cell differentiation"/>
    <property type="evidence" value="ECO:0000314"/>
    <property type="project" value="RGD"/>
</dbReference>
<dbReference type="GO" id="GO:0001892">
    <property type="term" value="P:embryonic placenta development"/>
    <property type="evidence" value="ECO:0000266"/>
    <property type="project" value="RGD"/>
</dbReference>
<dbReference type="GO" id="GO:0050673">
    <property type="term" value="P:epithelial cell proliferation"/>
    <property type="evidence" value="ECO:0000304"/>
    <property type="project" value="RGD"/>
</dbReference>
<dbReference type="GO" id="GO:0042045">
    <property type="term" value="P:epithelial fluid transport"/>
    <property type="evidence" value="ECO:0000314"/>
    <property type="project" value="RGD"/>
</dbReference>
<dbReference type="GO" id="GO:0038157">
    <property type="term" value="P:granulocyte-macrophage colony-stimulating factor signaling pathway"/>
    <property type="evidence" value="ECO:0000266"/>
    <property type="project" value="RGD"/>
</dbReference>
<dbReference type="GO" id="GO:0001821">
    <property type="term" value="P:histamine secretion"/>
    <property type="evidence" value="ECO:0000314"/>
    <property type="project" value="RGD"/>
</dbReference>
<dbReference type="GO" id="GO:0006955">
    <property type="term" value="P:immune response"/>
    <property type="evidence" value="ECO:0007669"/>
    <property type="project" value="InterPro"/>
</dbReference>
<dbReference type="GO" id="GO:0030225">
    <property type="term" value="P:macrophage differentiation"/>
    <property type="evidence" value="ECO:0000266"/>
    <property type="project" value="RGD"/>
</dbReference>
<dbReference type="GO" id="GO:0030224">
    <property type="term" value="P:monocyte differentiation"/>
    <property type="evidence" value="ECO:0000266"/>
    <property type="project" value="RGD"/>
</dbReference>
<dbReference type="GO" id="GO:0030099">
    <property type="term" value="P:myeloid cell differentiation"/>
    <property type="evidence" value="ECO:0000318"/>
    <property type="project" value="GO_Central"/>
</dbReference>
<dbReference type="GO" id="GO:0043011">
    <property type="term" value="P:myeloid dendritic cell differentiation"/>
    <property type="evidence" value="ECO:0000266"/>
    <property type="project" value="RGD"/>
</dbReference>
<dbReference type="GO" id="GO:0045892">
    <property type="term" value="P:negative regulation of DNA-templated transcription"/>
    <property type="evidence" value="ECO:0000266"/>
    <property type="project" value="RGD"/>
</dbReference>
<dbReference type="GO" id="GO:2001240">
    <property type="term" value="P:negative regulation of extrinsic apoptotic signaling pathway in absence of ligand"/>
    <property type="evidence" value="ECO:0000266"/>
    <property type="project" value="RGD"/>
</dbReference>
<dbReference type="GO" id="GO:0030223">
    <property type="term" value="P:neutrophil differentiation"/>
    <property type="evidence" value="ECO:0000266"/>
    <property type="project" value="RGD"/>
</dbReference>
<dbReference type="GO" id="GO:0030335">
    <property type="term" value="P:positive regulation of cell migration"/>
    <property type="evidence" value="ECO:0000315"/>
    <property type="project" value="RGD"/>
</dbReference>
<dbReference type="GO" id="GO:0008284">
    <property type="term" value="P:positive regulation of cell population proliferation"/>
    <property type="evidence" value="ECO:0000266"/>
    <property type="project" value="RGD"/>
</dbReference>
<dbReference type="GO" id="GO:0070374">
    <property type="term" value="P:positive regulation of ERK1 and ERK2 cascade"/>
    <property type="evidence" value="ECO:0000266"/>
    <property type="project" value="RGD"/>
</dbReference>
<dbReference type="GO" id="GO:0010628">
    <property type="term" value="P:positive regulation of gene expression"/>
    <property type="evidence" value="ECO:0000266"/>
    <property type="project" value="RGD"/>
</dbReference>
<dbReference type="GO" id="GO:0032747">
    <property type="term" value="P:positive regulation of interleukin-23 production"/>
    <property type="evidence" value="ECO:0000266"/>
    <property type="project" value="RGD"/>
</dbReference>
<dbReference type="GO" id="GO:0070665">
    <property type="term" value="P:positive regulation of leukocyte proliferation"/>
    <property type="evidence" value="ECO:0000266"/>
    <property type="project" value="RGD"/>
</dbReference>
<dbReference type="GO" id="GO:0010744">
    <property type="term" value="P:positive regulation of macrophage derived foam cell differentiation"/>
    <property type="evidence" value="ECO:0000266"/>
    <property type="project" value="RGD"/>
</dbReference>
<dbReference type="GO" id="GO:0045651">
    <property type="term" value="P:positive regulation of macrophage differentiation"/>
    <property type="evidence" value="ECO:0000304"/>
    <property type="project" value="RGD"/>
</dbReference>
<dbReference type="GO" id="GO:0051897">
    <property type="term" value="P:positive regulation of phosphatidylinositol 3-kinase/protein kinase B signal transduction"/>
    <property type="evidence" value="ECO:0000266"/>
    <property type="project" value="RGD"/>
</dbReference>
<dbReference type="GO" id="GO:0071803">
    <property type="term" value="P:positive regulation of podosome assembly"/>
    <property type="evidence" value="ECO:0000266"/>
    <property type="project" value="RGD"/>
</dbReference>
<dbReference type="GO" id="GO:1904075">
    <property type="term" value="P:positive regulation of trophectodermal cell proliferation"/>
    <property type="evidence" value="ECO:0000266"/>
    <property type="project" value="RGD"/>
</dbReference>
<dbReference type="GO" id="GO:0042127">
    <property type="term" value="P:regulation of cell population proliferation"/>
    <property type="evidence" value="ECO:0000266"/>
    <property type="project" value="RGD"/>
</dbReference>
<dbReference type="GO" id="GO:0045187">
    <property type="term" value="P:regulation of circadian sleep/wake cycle, sleep"/>
    <property type="evidence" value="ECO:0000315"/>
    <property type="project" value="RGD"/>
</dbReference>
<dbReference type="GO" id="GO:0010468">
    <property type="term" value="P:regulation of gene expression"/>
    <property type="evidence" value="ECO:0000266"/>
    <property type="project" value="RGD"/>
</dbReference>
<dbReference type="GO" id="GO:0034405">
    <property type="term" value="P:response to fluid shear stress"/>
    <property type="evidence" value="ECO:0000270"/>
    <property type="project" value="RGD"/>
</dbReference>
<dbReference type="GO" id="GO:0034021">
    <property type="term" value="P:response to silicon dioxide"/>
    <property type="evidence" value="ECO:0000270"/>
    <property type="project" value="RGD"/>
</dbReference>
<dbReference type="GO" id="GO:0031929">
    <property type="term" value="P:TOR signaling"/>
    <property type="evidence" value="ECO:0000266"/>
    <property type="project" value="RGD"/>
</dbReference>
<dbReference type="CDD" id="cd00040">
    <property type="entry name" value="CSF2"/>
    <property type="match status" value="1"/>
</dbReference>
<dbReference type="Gene3D" id="1.20.1250.10">
    <property type="match status" value="1"/>
</dbReference>
<dbReference type="InterPro" id="IPR009079">
    <property type="entry name" value="4_helix_cytokine-like_core"/>
</dbReference>
<dbReference type="InterPro" id="IPR000773">
    <property type="entry name" value="GM_colony-stim-fac"/>
</dbReference>
<dbReference type="PANTHER" id="PTHR10059:SF0">
    <property type="entry name" value="GRANULOCYTE-MACROPHAGE COLONY-STIMULATING FACTOR"/>
    <property type="match status" value="1"/>
</dbReference>
<dbReference type="PANTHER" id="PTHR10059">
    <property type="entry name" value="GRANULOCYTE-MACROPHAGE COLONY-STIMULATING FACTOR GM-CSF"/>
    <property type="match status" value="1"/>
</dbReference>
<dbReference type="Pfam" id="PF01109">
    <property type="entry name" value="GM_CSF"/>
    <property type="match status" value="1"/>
</dbReference>
<dbReference type="PRINTS" id="PR00693">
    <property type="entry name" value="GMCSFACTOR"/>
</dbReference>
<dbReference type="SMART" id="SM00040">
    <property type="entry name" value="CSF2"/>
    <property type="match status" value="1"/>
</dbReference>
<dbReference type="SUPFAM" id="SSF47266">
    <property type="entry name" value="4-helical cytokines"/>
    <property type="match status" value="1"/>
</dbReference>
<dbReference type="PROSITE" id="PS00702">
    <property type="entry name" value="GM_CSF"/>
    <property type="match status" value="1"/>
</dbReference>
<evidence type="ECO:0000250" key="1"/>
<evidence type="ECO:0000255" key="2"/>
<evidence type="ECO:0000305" key="3"/>
<protein>
    <recommendedName>
        <fullName>Granulocyte-macrophage colony-stimulating factor</fullName>
        <shortName>GM-CSF</shortName>
    </recommendedName>
    <alternativeName>
        <fullName>Colony-stimulating factor</fullName>
        <shortName>CSF</shortName>
    </alternativeName>
</protein>
<organism>
    <name type="scientific">Rattus norvegicus</name>
    <name type="common">Rat</name>
    <dbReference type="NCBI Taxonomy" id="10116"/>
    <lineage>
        <taxon>Eukaryota</taxon>
        <taxon>Metazoa</taxon>
        <taxon>Chordata</taxon>
        <taxon>Craniata</taxon>
        <taxon>Vertebrata</taxon>
        <taxon>Euteleostomi</taxon>
        <taxon>Mammalia</taxon>
        <taxon>Eutheria</taxon>
        <taxon>Euarchontoglires</taxon>
        <taxon>Glires</taxon>
        <taxon>Rodentia</taxon>
        <taxon>Myomorpha</taxon>
        <taxon>Muroidea</taxon>
        <taxon>Muridae</taxon>
        <taxon>Murinae</taxon>
        <taxon>Rattus</taxon>
    </lineage>
</organism>
<reference key="1">
    <citation type="journal article" date="2004" name="Nature">
        <title>Genome sequence of the Brown Norway rat yields insights into mammalian evolution.</title>
        <authorList>
            <person name="Gibbs R.A."/>
            <person name="Weinstock G.M."/>
            <person name="Metzker M.L."/>
            <person name="Muzny D.M."/>
            <person name="Sodergren E.J."/>
            <person name="Scherer S."/>
            <person name="Scott G."/>
            <person name="Steffen D."/>
            <person name="Worley K.C."/>
            <person name="Burch P.E."/>
            <person name="Okwuonu G."/>
            <person name="Hines S."/>
            <person name="Lewis L."/>
            <person name="Deramo C."/>
            <person name="Delgado O."/>
            <person name="Dugan-Rocha S."/>
            <person name="Miner G."/>
            <person name="Morgan M."/>
            <person name="Hawes A."/>
            <person name="Gill R."/>
            <person name="Holt R.A."/>
            <person name="Adams M.D."/>
            <person name="Amanatides P.G."/>
            <person name="Baden-Tillson H."/>
            <person name="Barnstead M."/>
            <person name="Chin S."/>
            <person name="Evans C.A."/>
            <person name="Ferriera S."/>
            <person name="Fosler C."/>
            <person name="Glodek A."/>
            <person name="Gu Z."/>
            <person name="Jennings D."/>
            <person name="Kraft C.L."/>
            <person name="Nguyen T."/>
            <person name="Pfannkoch C.M."/>
            <person name="Sitter C."/>
            <person name="Sutton G.G."/>
            <person name="Venter J.C."/>
            <person name="Woodage T."/>
            <person name="Smith D."/>
            <person name="Lee H.-M."/>
            <person name="Gustafson E."/>
            <person name="Cahill P."/>
            <person name="Kana A."/>
            <person name="Doucette-Stamm L."/>
            <person name="Weinstock K."/>
            <person name="Fechtel K."/>
            <person name="Weiss R.B."/>
            <person name="Dunn D.M."/>
            <person name="Green E.D."/>
            <person name="Blakesley R.W."/>
            <person name="Bouffard G.G."/>
            <person name="De Jong P.J."/>
            <person name="Osoegawa K."/>
            <person name="Zhu B."/>
            <person name="Marra M."/>
            <person name="Schein J."/>
            <person name="Bosdet I."/>
            <person name="Fjell C."/>
            <person name="Jones S."/>
            <person name="Krzywinski M."/>
            <person name="Mathewson C."/>
            <person name="Siddiqui A."/>
            <person name="Wye N."/>
            <person name="McPherson J."/>
            <person name="Zhao S."/>
            <person name="Fraser C.M."/>
            <person name="Shetty J."/>
            <person name="Shatsman S."/>
            <person name="Geer K."/>
            <person name="Chen Y."/>
            <person name="Abramzon S."/>
            <person name="Nierman W.C."/>
            <person name="Havlak P.H."/>
            <person name="Chen R."/>
            <person name="Durbin K.J."/>
            <person name="Egan A."/>
            <person name="Ren Y."/>
            <person name="Song X.-Z."/>
            <person name="Li B."/>
            <person name="Liu Y."/>
            <person name="Qin X."/>
            <person name="Cawley S."/>
            <person name="Cooney A.J."/>
            <person name="D'Souza L.M."/>
            <person name="Martin K."/>
            <person name="Wu J.Q."/>
            <person name="Gonzalez-Garay M.L."/>
            <person name="Jackson A.R."/>
            <person name="Kalafus K.J."/>
            <person name="McLeod M.P."/>
            <person name="Milosavljevic A."/>
            <person name="Virk D."/>
            <person name="Volkov A."/>
            <person name="Wheeler D.A."/>
            <person name="Zhang Z."/>
            <person name="Bailey J.A."/>
            <person name="Eichler E.E."/>
            <person name="Tuzun E."/>
            <person name="Birney E."/>
            <person name="Mongin E."/>
            <person name="Ureta-Vidal A."/>
            <person name="Woodwark C."/>
            <person name="Zdobnov E."/>
            <person name="Bork P."/>
            <person name="Suyama M."/>
            <person name="Torrents D."/>
            <person name="Alexandersson M."/>
            <person name="Trask B.J."/>
            <person name="Young J.M."/>
            <person name="Huang H."/>
            <person name="Wang H."/>
            <person name="Xing H."/>
            <person name="Daniels S."/>
            <person name="Gietzen D."/>
            <person name="Schmidt J."/>
            <person name="Stevens K."/>
            <person name="Vitt U."/>
            <person name="Wingrove J."/>
            <person name="Camara F."/>
            <person name="Mar Alba M."/>
            <person name="Abril J.F."/>
            <person name="Guigo R."/>
            <person name="Smit A."/>
            <person name="Dubchak I."/>
            <person name="Rubin E.M."/>
            <person name="Couronne O."/>
            <person name="Poliakov A."/>
            <person name="Huebner N."/>
            <person name="Ganten D."/>
            <person name="Goesele C."/>
            <person name="Hummel O."/>
            <person name="Kreitler T."/>
            <person name="Lee Y.-A."/>
            <person name="Monti J."/>
            <person name="Schulz H."/>
            <person name="Zimdahl H."/>
            <person name="Himmelbauer H."/>
            <person name="Lehrach H."/>
            <person name="Jacob H.J."/>
            <person name="Bromberg S."/>
            <person name="Gullings-Handley J."/>
            <person name="Jensen-Seaman M.I."/>
            <person name="Kwitek A.E."/>
            <person name="Lazar J."/>
            <person name="Pasko D."/>
            <person name="Tonellato P.J."/>
            <person name="Twigger S."/>
            <person name="Ponting C.P."/>
            <person name="Duarte J.M."/>
            <person name="Rice S."/>
            <person name="Goodstadt L."/>
            <person name="Beatson S.A."/>
            <person name="Emes R.D."/>
            <person name="Winter E.E."/>
            <person name="Webber C."/>
            <person name="Brandt P."/>
            <person name="Nyakatura G."/>
            <person name="Adetobi M."/>
            <person name="Chiaromonte F."/>
            <person name="Elnitski L."/>
            <person name="Eswara P."/>
            <person name="Hardison R.C."/>
            <person name="Hou M."/>
            <person name="Kolbe D."/>
            <person name="Makova K."/>
            <person name="Miller W."/>
            <person name="Nekrutenko A."/>
            <person name="Riemer C."/>
            <person name="Schwartz S."/>
            <person name="Taylor J."/>
            <person name="Yang S."/>
            <person name="Zhang Y."/>
            <person name="Lindpaintner K."/>
            <person name="Andrews T.D."/>
            <person name="Caccamo M."/>
            <person name="Clamp M."/>
            <person name="Clarke L."/>
            <person name="Curwen V."/>
            <person name="Durbin R.M."/>
            <person name="Eyras E."/>
            <person name="Searle S.M."/>
            <person name="Cooper G.M."/>
            <person name="Batzoglou S."/>
            <person name="Brudno M."/>
            <person name="Sidow A."/>
            <person name="Stone E.A."/>
            <person name="Payseur B.A."/>
            <person name="Bourque G."/>
            <person name="Lopez-Otin C."/>
            <person name="Puente X.S."/>
            <person name="Chakrabarti K."/>
            <person name="Chatterji S."/>
            <person name="Dewey C."/>
            <person name="Pachter L."/>
            <person name="Bray N."/>
            <person name="Yap V.B."/>
            <person name="Caspi A."/>
            <person name="Tesler G."/>
            <person name="Pevzner P.A."/>
            <person name="Haussler D."/>
            <person name="Roskin K.M."/>
            <person name="Baertsch R."/>
            <person name="Clawson H."/>
            <person name="Furey T.S."/>
            <person name="Hinrichs A.S."/>
            <person name="Karolchik D."/>
            <person name="Kent W.J."/>
            <person name="Rosenbloom K.R."/>
            <person name="Trumbower H."/>
            <person name="Weirauch M."/>
            <person name="Cooper D.N."/>
            <person name="Stenson P.D."/>
            <person name="Ma B."/>
            <person name="Brent M."/>
            <person name="Arumugam M."/>
            <person name="Shteynberg D."/>
            <person name="Copley R.R."/>
            <person name="Taylor M.S."/>
            <person name="Riethman H."/>
            <person name="Mudunuri U."/>
            <person name="Peterson J."/>
            <person name="Guyer M."/>
            <person name="Felsenfeld A."/>
            <person name="Old S."/>
            <person name="Mockrin S."/>
            <person name="Collins F.S."/>
        </authorList>
    </citation>
    <scope>NUCLEOTIDE SEQUENCE [LARGE SCALE GENOMIC DNA]</scope>
    <source>
        <strain>Brown Norway</strain>
    </source>
</reference>
<reference key="2">
    <citation type="journal article" date="1994" name="Immunogenetics">
        <title>Nucleotide sequence of the Lewis rat granulocyte-macrophage colony stimulating factor.</title>
        <authorList>
            <person name="Smith L.R."/>
            <person name="Lundeen K.A."/>
            <person name="Diveley J.P."/>
            <person name="Carlo D.J."/>
            <person name="Brostoff S.W."/>
        </authorList>
    </citation>
    <scope>NUCLEOTIDE SEQUENCE [MRNA] OF 18-144</scope>
    <source>
        <strain>Lewis</strain>
        <tissue>Splenocyte</tissue>
    </source>
</reference>